<comment type="function">
    <text evidence="1">Catalyzes the transfer of an acyl group from acyl-phosphate (acyl-PO(4)) to glycerol-3-phosphate (G3P) to form lysophosphatidic acid (LPA). This enzyme utilizes acyl-phosphate as fatty acyl donor, but not acyl-CoA or acyl-ACP.</text>
</comment>
<comment type="catalytic activity">
    <reaction evidence="1">
        <text>an acyl phosphate + sn-glycerol 3-phosphate = a 1-acyl-sn-glycero-3-phosphate + phosphate</text>
        <dbReference type="Rhea" id="RHEA:34075"/>
        <dbReference type="ChEBI" id="CHEBI:43474"/>
        <dbReference type="ChEBI" id="CHEBI:57597"/>
        <dbReference type="ChEBI" id="CHEBI:57970"/>
        <dbReference type="ChEBI" id="CHEBI:59918"/>
        <dbReference type="EC" id="2.3.1.275"/>
    </reaction>
</comment>
<comment type="pathway">
    <text evidence="1">Lipid metabolism; phospholipid metabolism.</text>
</comment>
<comment type="subunit">
    <text evidence="1">Probably interacts with PlsX.</text>
</comment>
<comment type="subcellular location">
    <subcellularLocation>
        <location evidence="1">Cell inner membrane</location>
        <topology evidence="1">Multi-pass membrane protein</topology>
    </subcellularLocation>
</comment>
<comment type="similarity">
    <text evidence="1">Belongs to the PlsY family.</text>
</comment>
<organism>
    <name type="scientific">Legionella pneumophila subsp. pneumophila (strain Philadelphia 1 / ATCC 33152 / DSM 7513)</name>
    <dbReference type="NCBI Taxonomy" id="272624"/>
    <lineage>
        <taxon>Bacteria</taxon>
        <taxon>Pseudomonadati</taxon>
        <taxon>Pseudomonadota</taxon>
        <taxon>Gammaproteobacteria</taxon>
        <taxon>Legionellales</taxon>
        <taxon>Legionellaceae</taxon>
        <taxon>Legionella</taxon>
    </lineage>
</organism>
<sequence>MALFIFLILVGYLMGSINSAIIVCRTFGLPDPREEGSKNPGATNVLRLGGKQYGIMVMVFDALKGILPVILAKFLSAEPVTVAFTALAAVVGHMYPVFFHFRGGKGVATTIGALLAFHFIIGVMVAATWLLVANFWRYSSLASIASISLAPFYSLILVGNLNIFPPLFMITILVLYKHRDNFNRLIDGKEPKIKFKHSVIEEIMEASPATSAEQEFPGKEVIDTNIDETEKTEQAEAVKKPKVKKATTKAKKTTSKEETTKKPKSTKPKTKTVKEKE</sequence>
<name>PLSY_LEGPH</name>
<accession>Q5ZT09</accession>
<protein>
    <recommendedName>
        <fullName evidence="1">Glycerol-3-phosphate acyltransferase</fullName>
    </recommendedName>
    <alternativeName>
        <fullName evidence="1">Acyl-PO4 G3P acyltransferase</fullName>
    </alternativeName>
    <alternativeName>
        <fullName evidence="1">Acyl-phosphate--glycerol-3-phosphate acyltransferase</fullName>
    </alternativeName>
    <alternativeName>
        <fullName evidence="1">G3P acyltransferase</fullName>
        <shortName evidence="1">GPAT</shortName>
        <ecNumber evidence="1">2.3.1.275</ecNumber>
    </alternativeName>
    <alternativeName>
        <fullName evidence="1">Lysophosphatidic acid synthase</fullName>
        <shortName evidence="1">LPA synthase</shortName>
    </alternativeName>
</protein>
<feature type="chain" id="PRO_0000188392" description="Glycerol-3-phosphate acyltransferase">
    <location>
        <begin position="1"/>
        <end position="277"/>
    </location>
</feature>
<feature type="transmembrane region" description="Helical" evidence="1">
    <location>
        <begin position="3"/>
        <end position="23"/>
    </location>
</feature>
<feature type="transmembrane region" description="Helical" evidence="1">
    <location>
        <begin position="55"/>
        <end position="75"/>
    </location>
</feature>
<feature type="transmembrane region" description="Helical" evidence="1">
    <location>
        <begin position="79"/>
        <end position="99"/>
    </location>
</feature>
<feature type="transmembrane region" description="Helical" evidence="1">
    <location>
        <begin position="111"/>
        <end position="131"/>
    </location>
</feature>
<feature type="transmembrane region" description="Helical" evidence="1">
    <location>
        <begin position="155"/>
        <end position="175"/>
    </location>
</feature>
<feature type="region of interest" description="Disordered" evidence="2">
    <location>
        <begin position="207"/>
        <end position="277"/>
    </location>
</feature>
<feature type="compositionally biased region" description="Basic and acidic residues" evidence="2">
    <location>
        <begin position="216"/>
        <end position="239"/>
    </location>
</feature>
<feature type="compositionally biased region" description="Basic residues" evidence="2">
    <location>
        <begin position="240"/>
        <end position="253"/>
    </location>
</feature>
<feature type="compositionally biased region" description="Basic residues" evidence="2">
    <location>
        <begin position="262"/>
        <end position="271"/>
    </location>
</feature>
<reference key="1">
    <citation type="journal article" date="2004" name="Science">
        <title>The genomic sequence of the accidental pathogen Legionella pneumophila.</title>
        <authorList>
            <person name="Chien M."/>
            <person name="Morozova I."/>
            <person name="Shi S."/>
            <person name="Sheng H."/>
            <person name="Chen J."/>
            <person name="Gomez S.M."/>
            <person name="Asamani G."/>
            <person name="Hill K."/>
            <person name="Nuara J."/>
            <person name="Feder M."/>
            <person name="Rineer J."/>
            <person name="Greenberg J.J."/>
            <person name="Steshenko V."/>
            <person name="Park S.H."/>
            <person name="Zhao B."/>
            <person name="Teplitskaya E."/>
            <person name="Edwards J.R."/>
            <person name="Pampou S."/>
            <person name="Georghiou A."/>
            <person name="Chou I.-C."/>
            <person name="Iannuccilli W."/>
            <person name="Ulz M.E."/>
            <person name="Kim D.H."/>
            <person name="Geringer-Sameth A."/>
            <person name="Goldsberry C."/>
            <person name="Morozov P."/>
            <person name="Fischer S.G."/>
            <person name="Segal G."/>
            <person name="Qu X."/>
            <person name="Rzhetsky A."/>
            <person name="Zhang P."/>
            <person name="Cayanis E."/>
            <person name="De Jong P.J."/>
            <person name="Ju J."/>
            <person name="Kalachikov S."/>
            <person name="Shuman H.A."/>
            <person name="Russo J.J."/>
        </authorList>
    </citation>
    <scope>NUCLEOTIDE SEQUENCE [LARGE SCALE GENOMIC DNA]</scope>
    <source>
        <strain>Philadelphia 1 / ATCC 33152 / DSM 7513</strain>
    </source>
</reference>
<dbReference type="EC" id="2.3.1.275" evidence="1"/>
<dbReference type="EMBL" id="AE017354">
    <property type="protein sequence ID" value="AAU28418.1"/>
    <property type="molecule type" value="Genomic_DNA"/>
</dbReference>
<dbReference type="RefSeq" id="WP_010948062.1">
    <property type="nucleotide sequence ID" value="NC_002942.5"/>
</dbReference>
<dbReference type="RefSeq" id="YP_096365.1">
    <property type="nucleotide sequence ID" value="NC_002942.5"/>
</dbReference>
<dbReference type="SMR" id="Q5ZT09"/>
<dbReference type="STRING" id="272624.lpg2356"/>
<dbReference type="PaxDb" id="272624-lpg2356"/>
<dbReference type="GeneID" id="57036349"/>
<dbReference type="KEGG" id="lpn:lpg2356"/>
<dbReference type="PATRIC" id="fig|272624.6.peg.2478"/>
<dbReference type="eggNOG" id="COG0344">
    <property type="taxonomic scope" value="Bacteria"/>
</dbReference>
<dbReference type="HOGENOM" id="CLU_081254_0_1_6"/>
<dbReference type="OrthoDB" id="9777124at2"/>
<dbReference type="UniPathway" id="UPA00085"/>
<dbReference type="Proteomes" id="UP000000609">
    <property type="component" value="Chromosome"/>
</dbReference>
<dbReference type="GO" id="GO:0005886">
    <property type="term" value="C:plasma membrane"/>
    <property type="evidence" value="ECO:0007669"/>
    <property type="project" value="UniProtKB-SubCell"/>
</dbReference>
<dbReference type="GO" id="GO:0043772">
    <property type="term" value="F:acyl-phosphate glycerol-3-phosphate acyltransferase activity"/>
    <property type="evidence" value="ECO:0007669"/>
    <property type="project" value="UniProtKB-UniRule"/>
</dbReference>
<dbReference type="GO" id="GO:0008654">
    <property type="term" value="P:phospholipid biosynthetic process"/>
    <property type="evidence" value="ECO:0007669"/>
    <property type="project" value="UniProtKB-UniRule"/>
</dbReference>
<dbReference type="HAMAP" id="MF_01043">
    <property type="entry name" value="PlsY"/>
    <property type="match status" value="1"/>
</dbReference>
<dbReference type="InterPro" id="IPR003811">
    <property type="entry name" value="G3P_acylTferase_PlsY"/>
</dbReference>
<dbReference type="NCBIfam" id="TIGR00023">
    <property type="entry name" value="glycerol-3-phosphate 1-O-acyltransferase PlsY"/>
    <property type="match status" value="1"/>
</dbReference>
<dbReference type="PANTHER" id="PTHR30309:SF0">
    <property type="entry name" value="GLYCEROL-3-PHOSPHATE ACYLTRANSFERASE-RELATED"/>
    <property type="match status" value="1"/>
</dbReference>
<dbReference type="PANTHER" id="PTHR30309">
    <property type="entry name" value="INNER MEMBRANE PROTEIN YGIH"/>
    <property type="match status" value="1"/>
</dbReference>
<dbReference type="Pfam" id="PF02660">
    <property type="entry name" value="G3P_acyltransf"/>
    <property type="match status" value="1"/>
</dbReference>
<dbReference type="SMART" id="SM01207">
    <property type="entry name" value="G3P_acyltransf"/>
    <property type="match status" value="1"/>
</dbReference>
<proteinExistence type="inferred from homology"/>
<evidence type="ECO:0000255" key="1">
    <source>
        <dbReference type="HAMAP-Rule" id="MF_01043"/>
    </source>
</evidence>
<evidence type="ECO:0000256" key="2">
    <source>
        <dbReference type="SAM" id="MobiDB-lite"/>
    </source>
</evidence>
<gene>
    <name evidence="1" type="primary">plsY</name>
    <name type="ordered locus">lpg2356</name>
</gene>
<keyword id="KW-0997">Cell inner membrane</keyword>
<keyword id="KW-1003">Cell membrane</keyword>
<keyword id="KW-0444">Lipid biosynthesis</keyword>
<keyword id="KW-0443">Lipid metabolism</keyword>
<keyword id="KW-0472">Membrane</keyword>
<keyword id="KW-0594">Phospholipid biosynthesis</keyword>
<keyword id="KW-1208">Phospholipid metabolism</keyword>
<keyword id="KW-1185">Reference proteome</keyword>
<keyword id="KW-0808">Transferase</keyword>
<keyword id="KW-0812">Transmembrane</keyword>
<keyword id="KW-1133">Transmembrane helix</keyword>